<name>CASP1_HUMAN</name>
<organism>
    <name type="scientific">Homo sapiens</name>
    <name type="common">Human</name>
    <dbReference type="NCBI Taxonomy" id="9606"/>
    <lineage>
        <taxon>Eukaryota</taxon>
        <taxon>Metazoa</taxon>
        <taxon>Chordata</taxon>
        <taxon>Craniata</taxon>
        <taxon>Vertebrata</taxon>
        <taxon>Euteleostomi</taxon>
        <taxon>Mammalia</taxon>
        <taxon>Eutheria</taxon>
        <taxon>Euarchontoglires</taxon>
        <taxon>Primates</taxon>
        <taxon>Haplorrhini</taxon>
        <taxon>Catarrhini</taxon>
        <taxon>Hominidae</taxon>
        <taxon>Homo</taxon>
    </lineage>
</organism>
<gene>
    <name type="primary">CASP1</name>
    <name type="synonym">IL1BC</name>
    <name type="synonym">IL1BCE</name>
</gene>
<keyword id="KW-0002">3D-structure</keyword>
<keyword id="KW-0025">Alternative splicing</keyword>
<keyword id="KW-0053">Apoptosis</keyword>
<keyword id="KW-1003">Cell membrane</keyword>
<keyword id="KW-0963">Cytoplasm</keyword>
<keyword id="KW-0903">Direct protein sequencing</keyword>
<keyword id="KW-0378">Hydrolase</keyword>
<keyword id="KW-1017">Isopeptide bond</keyword>
<keyword id="KW-0472">Membrane</keyword>
<keyword id="KW-0597">Phosphoprotein</keyword>
<keyword id="KW-0645">Protease</keyword>
<keyword id="KW-1267">Proteomics identification</keyword>
<keyword id="KW-1185">Reference proteome</keyword>
<keyword id="KW-0788">Thiol protease</keyword>
<keyword id="KW-0832">Ubl conjugation</keyword>
<keyword id="KW-0865">Zymogen</keyword>
<feature type="propeptide" id="PRO_0000004521">
    <location>
        <begin position="1"/>
        <end position="119"/>
    </location>
</feature>
<feature type="chain" id="PRO_0000004522" description="Caspase-1 subunit p20" evidence="35 36 37">
    <location>
        <begin position="120"/>
        <end position="297"/>
    </location>
</feature>
<feature type="propeptide" id="PRO_0000004523" description="Interdomain linker" evidence="29">
    <location>
        <begin position="298"/>
        <end position="316"/>
    </location>
</feature>
<feature type="chain" id="PRO_0000004524" description="Caspase-1 subunit p10" evidence="35 36 37">
    <location>
        <begin position="317"/>
        <end position="404"/>
    </location>
</feature>
<feature type="domain" description="CARD" evidence="2">
    <location>
        <begin position="1"/>
        <end position="91"/>
    </location>
</feature>
<feature type="active site" evidence="9">
    <location>
        <position position="237"/>
    </location>
</feature>
<feature type="active site" evidence="9 34">
    <location>
        <position position="285"/>
    </location>
</feature>
<feature type="modified residue" description="Phosphoserine" evidence="1">
    <location>
        <position position="302"/>
    </location>
</feature>
<feature type="cross-link" description="Glycyl lysine isopeptide (Lys-Gly) (interchain with G-Cter in ubiquitin)" evidence="16">
    <location>
        <position position="134"/>
    </location>
</feature>
<feature type="splice variant" id="VSP_000797" description="In isoform Epsilon." evidence="31">
    <location>
        <begin position="20"/>
        <end position="335"/>
    </location>
</feature>
<feature type="splice variant" id="VSP_000799" description="In isoform Gamma and isoform Delta." evidence="27 31">
    <location>
        <begin position="20"/>
        <end position="112"/>
    </location>
</feature>
<feature type="splice variant" id="VSP_000798" description="In isoform Beta." evidence="27 31">
    <location>
        <begin position="92"/>
        <end position="112"/>
    </location>
</feature>
<feature type="splice variant" id="VSP_000800" description="In isoform Delta." evidence="31">
    <location>
        <begin position="288"/>
        <end position="335"/>
    </location>
</feature>
<feature type="sequence variant" id="VAR_048615" description="In dbSNP:rs1042743.">
    <original>R</original>
    <variation>H</variation>
    <location>
        <position position="15"/>
    </location>
</feature>
<feature type="mutagenesis site" description="Loss of protease activity. Loss of SPHK2 cleavage and release in apoptotic cells." evidence="8 12 18 19 20">
    <original>C</original>
    <variation>A</variation>
    <variation>S</variation>
    <location>
        <position position="285"/>
    </location>
</feature>
<feature type="mutagenesis site" description="Mediates autoprocessing but is unable to interact with Gasdermin-D (GSDMD) and mediate its cleavage." evidence="19 20">
    <original>W</original>
    <variation>A</variation>
    <location>
        <position position="294"/>
    </location>
</feature>
<feature type="mutagenesis site" description="In IDL(uncl); abolished cleavage in the interdomain region; when associated with 315-N-N-316." evidence="18">
    <original>D</original>
    <variation>N</variation>
    <location>
        <position position="297"/>
    </location>
</feature>
<feature type="mutagenesis site" description="In IDL(uncl); abolished cleavage in the interdomain region; when associated with N-297." evidence="18">
    <original>DD</original>
    <variation>NN</variation>
    <location>
        <begin position="315"/>
        <end position="316"/>
    </location>
</feature>
<feature type="mutagenesis site" description="Abolished ability to cleave IL18." evidence="21">
    <original>IKK</original>
    <variation>AKA</variation>
    <location>
        <begin position="318"/>
        <end position="320"/>
    </location>
</feature>
<feature type="mutagenesis site" description="Mediates autoprocessing but is unable to interact with Gasdermin-D (GSDMD) and mediate its cleavage." evidence="19 20">
    <original>I</original>
    <variation>N</variation>
    <location>
        <position position="318"/>
    </location>
</feature>
<feature type="mutagenesis site" description="Abolishes cleavage of Gasdermin-D (GSDMD)." evidence="20">
    <original>K</original>
    <variation>A</variation>
    <location>
        <position position="320"/>
    </location>
</feature>
<feature type="sequence conflict" description="In Ref. 4; BAD97223." evidence="33" ref="4">
    <original>K</original>
    <variation>R</variation>
    <location>
        <position position="319"/>
    </location>
</feature>
<feature type="sequence conflict" description="In Ref. 4; BAD97223." evidence="33" ref="4">
    <original>P</original>
    <variation>L</variation>
    <location>
        <position position="402"/>
    </location>
</feature>
<feature type="turn" evidence="45">
    <location>
        <begin position="129"/>
        <end position="132"/>
    </location>
</feature>
<feature type="helix" evidence="45">
    <location>
        <begin position="138"/>
        <end position="147"/>
    </location>
</feature>
<feature type="helix" evidence="45">
    <location>
        <begin position="149"/>
        <end position="151"/>
    </location>
</feature>
<feature type="turn" evidence="45">
    <location>
        <begin position="158"/>
        <end position="160"/>
    </location>
</feature>
<feature type="strand" evidence="45">
    <location>
        <begin position="164"/>
        <end position="169"/>
    </location>
</feature>
<feature type="strand" evidence="45">
    <location>
        <begin position="174"/>
        <end position="176"/>
    </location>
</feature>
<feature type="helix" evidence="45">
    <location>
        <begin position="182"/>
        <end position="195"/>
    </location>
</feature>
<feature type="strand" evidence="45">
    <location>
        <begin position="199"/>
        <end position="205"/>
    </location>
</feature>
<feature type="helix" evidence="45">
    <location>
        <begin position="208"/>
        <end position="219"/>
    </location>
</feature>
<feature type="helix" evidence="45">
    <location>
        <begin position="222"/>
        <end position="226"/>
    </location>
</feature>
<feature type="strand" evidence="45">
    <location>
        <begin position="230"/>
        <end position="236"/>
    </location>
</feature>
<feature type="strand" evidence="42">
    <location>
        <begin position="242"/>
        <end position="244"/>
    </location>
</feature>
<feature type="strand" evidence="45">
    <location>
        <begin position="250"/>
        <end position="252"/>
    </location>
</feature>
<feature type="strand" evidence="43">
    <location>
        <begin position="255"/>
        <end position="257"/>
    </location>
</feature>
<feature type="helix" evidence="45">
    <location>
        <begin position="258"/>
        <end position="265"/>
    </location>
</feature>
<feature type="turn" evidence="45">
    <location>
        <begin position="267"/>
        <end position="269"/>
    </location>
</feature>
<feature type="helix" evidence="45">
    <location>
        <begin position="271"/>
        <end position="273"/>
    </location>
</feature>
<feature type="strand" evidence="45">
    <location>
        <begin position="278"/>
        <end position="284"/>
    </location>
</feature>
<feature type="strand" evidence="45">
    <location>
        <begin position="286"/>
        <end position="289"/>
    </location>
</feature>
<feature type="strand" evidence="44">
    <location>
        <begin position="291"/>
        <end position="298"/>
    </location>
</feature>
<feature type="helix" evidence="44">
    <location>
        <begin position="316"/>
        <end position="319"/>
    </location>
</feature>
<feature type="strand" evidence="47">
    <location>
        <begin position="320"/>
        <end position="324"/>
    </location>
</feature>
<feature type="strand" evidence="45">
    <location>
        <begin position="326"/>
        <end position="333"/>
    </location>
</feature>
<feature type="strand" evidence="45">
    <location>
        <begin position="340"/>
        <end position="342"/>
    </location>
</feature>
<feature type="turn" evidence="45">
    <location>
        <begin position="343"/>
        <end position="345"/>
    </location>
</feature>
<feature type="helix" evidence="45">
    <location>
        <begin position="348"/>
        <end position="360"/>
    </location>
</feature>
<feature type="turn" evidence="45">
    <location>
        <begin position="361"/>
        <end position="363"/>
    </location>
</feature>
<feature type="helix" evidence="45">
    <location>
        <begin position="366"/>
        <end position="376"/>
    </location>
</feature>
<feature type="strand" evidence="46">
    <location>
        <begin position="381"/>
        <end position="383"/>
    </location>
</feature>
<feature type="strand" evidence="45">
    <location>
        <begin position="388"/>
        <end position="391"/>
    </location>
</feature>
<feature type="strand" evidence="41">
    <location>
        <begin position="395"/>
        <end position="397"/>
    </location>
</feature>
<reference key="1">
    <citation type="journal article" date="1992" name="Nature">
        <title>A novel heterodimeric cysteine protease is required for interleukin-1 beta processing in monocytes.</title>
        <authorList>
            <person name="Thornberry N.A."/>
            <person name="Bull H.G."/>
            <person name="Calaycay J.R."/>
            <person name="Chapman K.T."/>
            <person name="Howard A.D."/>
            <person name="Kostura M.J."/>
            <person name="Miller D.K."/>
            <person name="Molineaux S.M."/>
            <person name="Weidner J.R."/>
            <person name="Aunins J."/>
            <person name="Elliston K.O."/>
            <person name="Ayala J.M."/>
            <person name="Casano F.J."/>
            <person name="Chin J."/>
            <person name="Ding G.J.-F."/>
            <person name="Egger L.A."/>
            <person name="Gaffney E.P."/>
            <person name="Limjuco G."/>
            <person name="Palyha O.C."/>
            <person name="Raju M."/>
            <person name="Rolando A.M."/>
            <person name="Salley J.P."/>
            <person name="Yamin T.-T."/>
            <person name="Lee T.D."/>
            <person name="Shively J.E."/>
            <person name="McCross M."/>
            <person name="Mumford R.A."/>
            <person name="Schmidt J.A."/>
            <person name="Tocci M.J."/>
        </authorList>
    </citation>
    <scope>NUCLEOTIDE SEQUENCE [MRNA] (ISOFORM ALPHA)</scope>
    <scope>PARTIAL PROTEIN SEQUENCE</scope>
    <scope>ACTIVE SITE</scope>
    <scope>FUNCTION</scope>
    <scope>CATALYTIC ACTIVITY</scope>
</reference>
<reference key="2">
    <citation type="journal article" date="1992" name="Science">
        <title>Molecular cloning of the interleukin-1 beta converting enzyme.</title>
        <authorList>
            <person name="Cerretti D.P."/>
            <person name="Kozlosky C.J."/>
            <person name="Mosley B."/>
            <person name="Nelson N."/>
            <person name="van Ness K."/>
            <person name="Greenstreet T.A."/>
            <person name="March C.J."/>
            <person name="Kronheim S.R."/>
            <person name="Druck T."/>
            <person name="Cannizzaro L.A."/>
            <person name="Huebner K."/>
            <person name="Black R.A."/>
        </authorList>
    </citation>
    <scope>NUCLEOTIDE SEQUENCE [MRNA] (ISOFORM ALPHA)</scope>
    <scope>PROTEIN SEQUENCE OF 120-142</scope>
</reference>
<reference key="3">
    <citation type="journal article" date="1995" name="J. Biol. Chem.">
        <title>Cloning and expression of four novel isoforms of human interleukin-1 beta converting enzyme with different apoptotic activities.</title>
        <authorList>
            <person name="Alnemri E.S."/>
            <person name="Fernandes-Alnemri T."/>
            <person name="Litwack G."/>
        </authorList>
    </citation>
    <scope>NUCLEOTIDE SEQUENCE [MRNA] (ISOFORMS BETA; DELTA; EPSILON AND GAMMA)</scope>
    <scope>ALTERNATIVE SPLICING</scope>
    <scope>FUNCTION</scope>
</reference>
<reference key="4">
    <citation type="submission" date="2005-04" db="EMBL/GenBank/DDBJ databases">
        <authorList>
            <person name="Totoki Y."/>
            <person name="Toyoda A."/>
            <person name="Takeda T."/>
            <person name="Sakaki Y."/>
            <person name="Tanaka A."/>
            <person name="Yokoyama S."/>
        </authorList>
    </citation>
    <scope>NUCLEOTIDE SEQUENCE [LARGE SCALE MRNA] (ISOFORM ALPHA)</scope>
</reference>
<reference key="5">
    <citation type="journal article" date="2006" name="Nature">
        <title>Human chromosome 11 DNA sequence and analysis including novel gene identification.</title>
        <authorList>
            <person name="Taylor T.D."/>
            <person name="Noguchi H."/>
            <person name="Totoki Y."/>
            <person name="Toyoda A."/>
            <person name="Kuroki Y."/>
            <person name="Dewar K."/>
            <person name="Lloyd C."/>
            <person name="Itoh T."/>
            <person name="Takeda T."/>
            <person name="Kim D.-W."/>
            <person name="She X."/>
            <person name="Barlow K.F."/>
            <person name="Bloom T."/>
            <person name="Bruford E."/>
            <person name="Chang J.L."/>
            <person name="Cuomo C.A."/>
            <person name="Eichler E."/>
            <person name="FitzGerald M.G."/>
            <person name="Jaffe D.B."/>
            <person name="LaButti K."/>
            <person name="Nicol R."/>
            <person name="Park H.-S."/>
            <person name="Seaman C."/>
            <person name="Sougnez C."/>
            <person name="Yang X."/>
            <person name="Zimmer A.R."/>
            <person name="Zody M.C."/>
            <person name="Birren B.W."/>
            <person name="Nusbaum C."/>
            <person name="Fujiyama A."/>
            <person name="Hattori M."/>
            <person name="Rogers J."/>
            <person name="Lander E.S."/>
            <person name="Sakaki Y."/>
        </authorList>
    </citation>
    <scope>NUCLEOTIDE SEQUENCE [LARGE SCALE GENOMIC DNA]</scope>
</reference>
<reference key="6">
    <citation type="journal article" date="2004" name="Genome Res.">
        <title>The status, quality, and expansion of the NIH full-length cDNA project: the Mammalian Gene Collection (MGC).</title>
        <authorList>
            <consortium name="The MGC Project Team"/>
        </authorList>
    </citation>
    <scope>NUCLEOTIDE SEQUENCE [LARGE SCALE MRNA] (ISOFORM GAMMA)</scope>
    <scope>NUCLEOTIDE SEQUENCE [LARGE SCALE MRNA] OF 4-404 (ISOFORM BETA)</scope>
    <source>
        <tissue>Testis</tissue>
    </source>
</reference>
<reference key="7">
    <citation type="journal article" date="2004" name="Genomics">
        <title>Caspase-1 zeta, a new splice variant of caspase-1 gene.</title>
        <authorList>
            <person name="Feng Q."/>
            <person name="Li P."/>
            <person name="Leung P.C.K."/>
            <person name="Auersperg N."/>
        </authorList>
    </citation>
    <scope>NUCLEOTIDE SEQUENCE [MRNA] OF 32-404 (ISOFORM ALPHA)</scope>
    <scope>FUNCTION</scope>
    <scope>MUTAGENESIS OF CYS-285</scope>
    <scope>ALTERNATIVE SPLICING</scope>
    <scope>TISSUE SPECIFICITY</scope>
</reference>
<reference key="8">
    <citation type="journal article" date="1992" name="Arch. Biochem. Biophys.">
        <title>Purification of interleukin-1 beta converting enzyme, the protease that cleaves the interleukin-1 beta precursor.</title>
        <authorList>
            <person name="Kronheim S.R."/>
            <person name="Mumma A."/>
            <person name="Greenstreet T."/>
            <person name="Glackin P.J."/>
            <person name="Van Ness K."/>
            <person name="March C.J."/>
            <person name="Black R.A."/>
        </authorList>
    </citation>
    <scope>PROTEIN SEQUENCE OF 120-142</scope>
</reference>
<reference key="9">
    <citation type="journal article" date="1992" name="Cell">
        <title>Viral inhibition of inflammation: cowpox virus encodes an inhibitor of the interleukin-1 beta converting enzyme.</title>
        <authorList>
            <person name="Ray C.A."/>
            <person name="Black R.A."/>
            <person name="Kronheim S.R."/>
            <person name="Greenstreet T.A."/>
            <person name="Sleath P.R."/>
            <person name="Salvesen G.S."/>
            <person name="Pickup D.J."/>
        </authorList>
    </citation>
    <scope>ACTIVITY REGULATION</scope>
</reference>
<reference key="10">
    <citation type="journal article" date="1997" name="J. Biol. Chem.">
        <title>Involvement of caspase-1 and caspase-3 in the production and processing of mature human interleukin 18 in monocytic THP.1 cells.</title>
        <authorList>
            <person name="Akita K."/>
            <person name="Ohtsuki T."/>
            <person name="Nukada Y."/>
            <person name="Tanimoto T."/>
            <person name="Namba M."/>
            <person name="Okura T."/>
            <person name="Takakura-Yamamoto R."/>
            <person name="Torigoe K."/>
            <person name="Gu Y."/>
            <person name="Su M.S."/>
            <person name="Fujii M."/>
            <person name="Satoh-Itoh M."/>
            <person name="Yamamoto K."/>
            <person name="Kohno K."/>
            <person name="Ikeda M."/>
            <person name="Kurimoto M."/>
        </authorList>
    </citation>
    <scope>FUNCTION</scope>
    <scope>CATALYTIC ACTIVITY</scope>
</reference>
<reference key="11">
    <citation type="journal article" date="2000" name="Cell">
        <title>ICEBERG: a novel inhibitor of interleukin-1beta generation.</title>
        <authorList>
            <person name="Humke E.W."/>
            <person name="Shriver S.K."/>
            <person name="Starovasnik M.A."/>
            <person name="Fairbrother W.J."/>
            <person name="Dixit V.M."/>
        </authorList>
    </citation>
    <scope>INTERACTION WITH CARD18</scope>
</reference>
<reference key="12">
    <citation type="journal article" date="2004" name="Immunity">
        <title>NALP3 forms an IL-1beta-processing inflammasome with increased activity in Muckle-Wells autoinflammatory disorder.</title>
        <authorList>
            <person name="Agostini L."/>
            <person name="Martinon F."/>
            <person name="Burns K."/>
            <person name="McDermott M.F."/>
            <person name="Hawkins P.N."/>
            <person name="Tschopp J."/>
        </authorList>
    </citation>
    <scope>COMPONENT OF THE INFLAMMASOME</scope>
</reference>
<reference key="13">
    <citation type="journal article" date="2004" name="J. Biol. Chem.">
        <title>INCA, a novel human caspase recruitment domain protein that inhibits interleukin-1beta generation.</title>
        <authorList>
            <person name="Lamkanfi M."/>
            <person name="Denecker G."/>
            <person name="Kalai M."/>
            <person name="D'hondt K."/>
            <person name="Meeus A."/>
            <person name="Declercq W."/>
            <person name="Saelens X."/>
            <person name="Vandenabeele P."/>
        </authorList>
    </citation>
    <scope>INTERACTION WITH CARD17P</scope>
</reference>
<reference key="14">
    <citation type="journal article" date="2004" name="Oncogene">
        <title>A novel isoform of pro-interleukin-18 expressed in ovarian tumors is resistant to caspase-1 and -4 processing.</title>
        <authorList>
            <person name="Gaggero A."/>
            <person name="De Ambrosis A."/>
            <person name="Mezzanzanica D."/>
            <person name="Piazza T."/>
            <person name="Rubartelli A."/>
            <person name="Figini M."/>
            <person name="Canevari S."/>
            <person name="Ferrini S."/>
        </authorList>
    </citation>
    <scope>FUNCTION</scope>
</reference>
<reference key="15">
    <citation type="journal article" date="2006" name="Proc. Natl. Acad. Sci. U.S.A.">
        <title>The B30.2 domain of pyrin, the familial Mediterranean fever protein, interacts directly with caspase-1 to modulate IL-1beta production.</title>
        <authorList>
            <person name="Chae J.J."/>
            <person name="Wood G."/>
            <person name="Masters S.L."/>
            <person name="Richard K."/>
            <person name="Park G."/>
            <person name="Smith B.J."/>
            <person name="Kastner D.L."/>
        </authorList>
    </citation>
    <scope>INTERACTION WITH MEFV</scope>
</reference>
<reference key="16">
    <citation type="journal article" date="2010" name="Blood">
        <title>Cleavage of sphingosine kinase 2 by caspase-1 provokes its release from apoptotic cells.</title>
        <authorList>
            <person name="Weigert A."/>
            <person name="Cremer S."/>
            <person name="Schmidt M.V."/>
            <person name="von Knethen A."/>
            <person name="Angioni C."/>
            <person name="Geisslinger G."/>
            <person name="Bruene B."/>
        </authorList>
    </citation>
    <scope>FUNCTION</scope>
    <scope>SUBCELLULAR LOCATION</scope>
    <scope>MUTAGENESIS OF CYS-285</scope>
</reference>
<reference key="17">
    <citation type="journal article" date="2010" name="Cell. Microbiol.">
        <title>Mycobacterium tuberculosis protein ESAT-6 is a potent activator of the NLRP3/ASC inflammasome.</title>
        <authorList>
            <person name="Mishra B.B."/>
            <person name="Moura-Alves P."/>
            <person name="Sonawane A."/>
            <person name="Hacohen N."/>
            <person name="Griffiths G."/>
            <person name="Moita L.F."/>
            <person name="Anes E."/>
        </authorList>
    </citation>
    <scope>INDUCTION BY M.TUBERCULOSIS</scope>
    <source>
        <tissue>Macrophage</tissue>
    </source>
</reference>
<reference key="18">
    <citation type="journal article" date="2011" name="BMC Syst. Biol.">
        <title>Initial characterization of the human central proteome.</title>
        <authorList>
            <person name="Burkard T.R."/>
            <person name="Planyavsky M."/>
            <person name="Kaupe I."/>
            <person name="Breitwieser F.P."/>
            <person name="Buerckstuemmer T."/>
            <person name="Bennett K.L."/>
            <person name="Superti-Furga G."/>
            <person name="Colinge J."/>
        </authorList>
    </citation>
    <scope>IDENTIFICATION BY MASS SPECTROMETRY [LARGE SCALE ANALYSIS]</scope>
</reference>
<reference key="19">
    <citation type="journal article" date="2012" name="Mol. Cell">
        <title>Inflammasome-activated caspase 7 cleaves PARP1 to enhance the expression of a subset of NF-kappaB target genes.</title>
        <authorList>
            <person name="Erener S."/>
            <person name="Petrilli V."/>
            <person name="Kassner I."/>
            <person name="Minotti R."/>
            <person name="Castillo R."/>
            <person name="Santoro R."/>
            <person name="Hassa P.O."/>
            <person name="Tschopp J."/>
            <person name="Hottiger M.O."/>
        </authorList>
    </citation>
    <scope>FUNCTION</scope>
    <scope>CATALYTIC ACTIVITY</scope>
</reference>
<reference key="20">
    <citation type="journal article" date="2015" name="Nature">
        <title>Cleavage of GSDMD by inflammatory caspases determines pyroptotic cell death.</title>
        <authorList>
            <person name="Shi J."/>
            <person name="Zhao Y."/>
            <person name="Wang K."/>
            <person name="Shi X."/>
            <person name="Wang Y."/>
            <person name="Huang H."/>
            <person name="Zhuang Y."/>
            <person name="Cai T."/>
            <person name="Wang F."/>
            <person name="Shao F."/>
        </authorList>
    </citation>
    <scope>FUNCTION</scope>
    <scope>CATALYTIC ACTIVITY</scope>
</reference>
<reference key="21">
    <citation type="journal article" date="2017" name="Immunity">
        <title>Inflammasome activation triggers caspase-1-mediated cleavage of cGAS to regulate responses to DNA virus infection.</title>
        <authorList>
            <person name="Wang Y."/>
            <person name="Ning X."/>
            <person name="Gao P."/>
            <person name="Wu S."/>
            <person name="Sha M."/>
            <person name="Lv M."/>
            <person name="Zhou X."/>
            <person name="Gao J."/>
            <person name="Fang R."/>
            <person name="Meng G."/>
            <person name="Su X."/>
            <person name="Jiang Z."/>
        </authorList>
    </citation>
    <scope>FUNCTION</scope>
</reference>
<reference key="22">
    <citation type="journal article" date="2018" name="EMBO J.">
        <title>Zika virus elicits inflammation to evade antiviral response by cleaving cGAS via NS1-caspase-1 axis.</title>
        <authorList>
            <person name="Zheng Y."/>
            <person name="Liu Q."/>
            <person name="Wu Y."/>
            <person name="Ma L."/>
            <person name="Zhang Z."/>
            <person name="Liu T."/>
            <person name="Jin S."/>
            <person name="She Y."/>
            <person name="Li Y.P."/>
            <person name="Cui J."/>
        </authorList>
    </citation>
    <scope>UBIQUITINATION AT LYS-134</scope>
</reference>
<reference key="23">
    <citation type="journal article" date="2019" name="Nat. Immunol.">
        <title>SERPINB1-mediated checkpoint of inflammatory caspase activation.</title>
        <authorList>
            <person name="Choi Y.J."/>
            <person name="Kim S."/>
            <person name="Choi Y."/>
            <person name="Nielsen T.B."/>
            <person name="Yan J."/>
            <person name="Lu A."/>
            <person name="Ruan J."/>
            <person name="Lee H.R."/>
            <person name="Wu H."/>
            <person name="Spellberg B."/>
            <person name="Jung J.U."/>
        </authorList>
    </citation>
    <scope>INTERACTION WITH SERPINB1</scope>
</reference>
<reference key="24">
    <citation type="journal article" date="2020" name="Life. Sci Alliance">
        <title>Caspase-1 interdomain linker cleavage is required for pyroptosis.</title>
        <authorList>
            <person name="Ball D.P."/>
            <person name="Taabazuing C.Y."/>
            <person name="Griswold A.R."/>
            <person name="Orth E.L."/>
            <person name="Rao S.D."/>
            <person name="Kotliar I.B."/>
            <person name="Vostal L.E."/>
            <person name="Johnson D.C."/>
            <person name="Bachovchin D.A."/>
        </authorList>
    </citation>
    <scope>FUNCTION</scope>
    <scope>INTERACTION WITH CARD8</scope>
    <scope>PROTEOLYTIC CLEAVAGE</scope>
    <scope>MUTAGENESIS OF CYS-285; ASP-297 AND 315-ASP-ASP-316</scope>
</reference>
<reference key="25">
    <citation type="journal article" date="2023" name="Nature">
        <title>Recognition and maturation of IL-18 by caspase-4 noncanonical inflammasome.</title>
        <authorList>
            <person name="Shi X."/>
            <person name="Sun Q."/>
            <person name="Hou Y."/>
            <person name="Zeng H."/>
            <person name="Cao Y."/>
            <person name="Dong M."/>
            <person name="Ding J."/>
            <person name="Shao F."/>
        </authorList>
    </citation>
    <scope>FUNCTION</scope>
    <scope>CATALYTIC ACTIVITY</scope>
    <scope>MUTAGENESIS OF 318-ILE--LYS-320</scope>
</reference>
<reference key="26">
    <citation type="journal article" date="1994" name="Cell">
        <title>Crystal structure of the cysteine protease interleukin-1 beta-converting enzyme: a (p20/p10)2 homodimer.</title>
        <authorList>
            <person name="Walker N.P.C."/>
            <person name="Talanian R.V."/>
            <person name="Brady K.D."/>
            <person name="Dang L.C."/>
            <person name="Bump N.J."/>
            <person name="Ferenz C.R."/>
            <person name="Franklin S."/>
            <person name="Ghayur T."/>
            <person name="Hackett M.C."/>
            <person name="Hammill L.D."/>
            <person name="Herzog L."/>
            <person name="Hugunin M."/>
            <person name="Houy W."/>
            <person name="Mankovich J.A."/>
            <person name="McGuiness L."/>
            <person name="Orlewicz E."/>
            <person name="Paskind M."/>
            <person name="Pratt C.A."/>
            <person name="Reis P."/>
            <person name="Summani A."/>
            <person name="Terranova M."/>
            <person name="Welch J.P."/>
            <person name="Xiong L."/>
            <person name="Moeller A."/>
            <person name="Tracey D.E."/>
            <person name="Kamen R."/>
            <person name="Wong W.W."/>
        </authorList>
    </citation>
    <scope>X-RAY CRYSTALLOGRAPHY (2.5 ANGSTROMS)</scope>
    <scope>SUBUNIT</scope>
</reference>
<reference key="27">
    <citation type="journal article" date="1997" name="Chem. Biol.">
        <title>A combinatorial approach for determining protease specificities: application to interleukin-1beta converting enzyme (ICE).</title>
        <authorList>
            <person name="Rano T.A."/>
            <person name="Timkey T."/>
            <person name="Peterson E.P."/>
            <person name="Rotonda J."/>
            <person name="Nicholson D.W."/>
            <person name="Becker J.W."/>
            <person name="Chapman K.T."/>
            <person name="Thornberry N.A."/>
        </authorList>
    </citation>
    <scope>X-RAY CRYSTALLOGRAPHY (2.73 ANGSTROMS)</scope>
</reference>
<reference key="28">
    <citation type="journal article" date="1999" name="Chem. Pharm. Bull.">
        <title>Peptide based interleukin-1 beta converting enzyme (ICE) inhibitors: synthesis, structure activity relationships and crystallographic study of the ICE-inhibitor complex.</title>
        <authorList>
            <person name="Okamoto Y."/>
            <person name="Anan H."/>
            <person name="Nakai E."/>
            <person name="Morihira K."/>
            <person name="Yonetoku Y."/>
            <person name="Kurihara H."/>
            <person name="Sakashita H."/>
            <person name="Terai Y."/>
            <person name="Takeuchi M."/>
            <person name="Shibanuma T."/>
            <person name="Isomura Y."/>
        </authorList>
    </citation>
    <scope>X-RAY CRYSTALLOGRAPHY (2.5 ANGSTROMS) IN COMPLEX WITH INHIBITORS</scope>
</reference>
<reference key="29">
    <citation type="journal article" date="2004" name="Structure">
        <title>Crystal structures of a ligand-free and malonate-bound human caspase-1: implications for the mechanism of substrate binding.</title>
        <authorList>
            <person name="Romanowski M.J."/>
            <person name="Scheer J.M."/>
            <person name="O'Brien T."/>
            <person name="McDowell R.S."/>
        </authorList>
    </citation>
    <scope>X-RAY CRYSTALLOGRAPHY (1.8 ANGSTROMS) OF 120-404 OF MUTANT ALA-285</scope>
</reference>
<reference evidence="38" key="30">
    <citation type="journal article" date="2020" name="Cell">
        <title>Structural mechanism for GSDMD targeting by autoprocessed caspases in pyroptosis.</title>
        <authorList>
            <person name="Wang K."/>
            <person name="Sun Q."/>
            <person name="Zhong X."/>
            <person name="Zeng M."/>
            <person name="Zeng H."/>
            <person name="Shi X."/>
            <person name="Li Z."/>
            <person name="Wang Y."/>
            <person name="Zhao Q."/>
            <person name="Shao F."/>
            <person name="Ding J."/>
        </authorList>
    </citation>
    <scope>X-RAY CRYSTALLOGRAPHY (2.79 ANGSTROMS) OF 131-297 AND 317-404 IN COMPLEX WITH GSDMD</scope>
    <scope>FUNCTION</scope>
    <scope>SUBUNIT</scope>
    <scope>PROTEOLYTIC CLEAVAGE</scope>
    <scope>MUTAGENESIS OF CYS-285; TRP-294 AND ILE-318</scope>
</reference>
<reference evidence="39" key="31">
    <citation type="journal article" date="2020" name="Immunity">
        <title>Caspase-1 engages full-length Gasdermin D through two distinct interfaces that mediate caspase recruitment and substrate cleavage.</title>
        <authorList>
            <person name="Liu Z."/>
            <person name="Wang C."/>
            <person name="Yang J."/>
            <person name="Chen Y."/>
            <person name="Zhou B."/>
            <person name="Abbott D.W."/>
            <person name="Xiao T.S."/>
        </authorList>
    </citation>
    <scope>X-RAY CRYSTALLOGRAPHY (3.40 ANGSTROMS) OF 120-303 AND 317-404 IN COMPLEX WITH GSDMD</scope>
    <scope>FUNCTION</scope>
    <scope>SUBUNIT</scope>
    <scope>MUTAGENESIS OF CYS-285; TRP-294; ILE-318 AND LYS-320</scope>
</reference>
<reference evidence="40" key="32">
    <citation type="journal article" date="2021" name="Nat. Commun.">
        <title>Mechanism of filament formation in UPA-promoted CARD8 and NLRP1 inflammasomes.</title>
        <authorList>
            <person name="Robert Hollingsworth L."/>
            <person name="David L."/>
            <person name="Li Y."/>
            <person name="Griswold A.R."/>
            <person name="Ruan J."/>
            <person name="Sharif H."/>
            <person name="Fontana P."/>
            <person name="Orth-He E.L."/>
            <person name="Fu T.M."/>
            <person name="Bachovchin D.A."/>
            <person name="Wu H."/>
        </authorList>
    </citation>
    <scope>STRUCTURE BY ELECTRON MICROSCOPY (3.90 ANGSTROMS) OF 2-86 IN COMPLEX WITH PYCARD</scope>
    <scope>INTERACTION WITH PYCARD</scope>
</reference>
<evidence type="ECO:0000250" key="1">
    <source>
        <dbReference type="UniProtKB" id="P29452"/>
    </source>
</evidence>
<evidence type="ECO:0000255" key="2">
    <source>
        <dbReference type="PROSITE-ProRule" id="PRU00046"/>
    </source>
</evidence>
<evidence type="ECO:0000269" key="3">
    <source>
    </source>
</evidence>
<evidence type="ECO:0000269" key="4">
    <source>
    </source>
</evidence>
<evidence type="ECO:0000269" key="5">
    <source>
    </source>
</evidence>
<evidence type="ECO:0000269" key="6">
    <source>
    </source>
</evidence>
<evidence type="ECO:0000269" key="7">
    <source>
    </source>
</evidence>
<evidence type="ECO:0000269" key="8">
    <source>
    </source>
</evidence>
<evidence type="ECO:0000269" key="9">
    <source>
    </source>
</evidence>
<evidence type="ECO:0000269" key="10">
    <source>
    </source>
</evidence>
<evidence type="ECO:0000269" key="11">
    <source>
    </source>
</evidence>
<evidence type="ECO:0000269" key="12">
    <source>
    </source>
</evidence>
<evidence type="ECO:0000269" key="13">
    <source>
    </source>
</evidence>
<evidence type="ECO:0000269" key="14">
    <source>
    </source>
</evidence>
<evidence type="ECO:0000269" key="15">
    <source>
    </source>
</evidence>
<evidence type="ECO:0000269" key="16">
    <source>
    </source>
</evidence>
<evidence type="ECO:0000269" key="17">
    <source>
    </source>
</evidence>
<evidence type="ECO:0000269" key="18">
    <source>
    </source>
</evidence>
<evidence type="ECO:0000269" key="19">
    <source>
    </source>
</evidence>
<evidence type="ECO:0000269" key="20">
    <source>
    </source>
</evidence>
<evidence type="ECO:0000269" key="21">
    <source>
    </source>
</evidence>
<evidence type="ECO:0000269" key="22">
    <source>
    </source>
</evidence>
<evidence type="ECO:0000269" key="23">
    <source>
    </source>
</evidence>
<evidence type="ECO:0000269" key="24">
    <source>
    </source>
</evidence>
<evidence type="ECO:0000269" key="25">
    <source>
    </source>
</evidence>
<evidence type="ECO:0000303" key="26">
    <source>
    </source>
</evidence>
<evidence type="ECO:0000303" key="27">
    <source>
    </source>
</evidence>
<evidence type="ECO:0000303" key="28">
    <source>
    </source>
</evidence>
<evidence type="ECO:0000303" key="29">
    <source>
    </source>
</evidence>
<evidence type="ECO:0000303" key="30">
    <source>
    </source>
</evidence>
<evidence type="ECO:0000303" key="31">
    <source>
    </source>
</evidence>
<evidence type="ECO:0000303" key="32">
    <source>
    </source>
</evidence>
<evidence type="ECO:0000305" key="33"/>
<evidence type="ECO:0000305" key="34">
    <source>
    </source>
</evidence>
<evidence type="ECO:0000305" key="35">
    <source>
    </source>
</evidence>
<evidence type="ECO:0000305" key="36">
    <source>
    </source>
</evidence>
<evidence type="ECO:0000305" key="37">
    <source>
    </source>
</evidence>
<evidence type="ECO:0007744" key="38">
    <source>
        <dbReference type="PDB" id="6KN0"/>
    </source>
</evidence>
<evidence type="ECO:0007744" key="39">
    <source>
        <dbReference type="PDB" id="6VIE"/>
    </source>
</evidence>
<evidence type="ECO:0007744" key="40">
    <source>
        <dbReference type="PDB" id="7KEU"/>
    </source>
</evidence>
<evidence type="ECO:0007829" key="41">
    <source>
        <dbReference type="PDB" id="1RWM"/>
    </source>
</evidence>
<evidence type="ECO:0007829" key="42">
    <source>
        <dbReference type="PDB" id="1SC3"/>
    </source>
</evidence>
<evidence type="ECO:0007829" key="43">
    <source>
        <dbReference type="PDB" id="1SC4"/>
    </source>
</evidence>
<evidence type="ECO:0007829" key="44">
    <source>
        <dbReference type="PDB" id="3E4C"/>
    </source>
</evidence>
<evidence type="ECO:0007829" key="45">
    <source>
        <dbReference type="PDB" id="6BZ9"/>
    </source>
</evidence>
<evidence type="ECO:0007829" key="46">
    <source>
        <dbReference type="PDB" id="6F6R"/>
    </source>
</evidence>
<evidence type="ECO:0007829" key="47">
    <source>
        <dbReference type="PDB" id="8SV1"/>
    </source>
</evidence>
<sequence length="404" mass="45159">MADKVLKEKRKLFIRSMGEGTINGLLDELLQTRVLNKEEMEKVKRENATVMDKTRALIDSVIPKGAQACQICITYICEEDSYLAGTLGLSADQTSGNYLNMQDSQGVLSSFPAPQAVQDNPAMPTSSGSEGNVKLCSLEEAQRIWKQKSAEIYPIMDKSSRTRLALIICNEEFDSIPRRTGAEVDITGMTMLLQNLGYSVDVKKNLTASDMTTELEAFAHRPEHKTSDSTFLVFMSHGIREGICGKKHSEQVPDILQLNAIFNMLNTKNCPSLKDKPKVIIIQACRGDSPGVVWFKDSVGVSGNLSLPTTEEFEDDAIKKAHIEKDFIAFCSSTPDNVSWRHPTMGSVFIGRLIEHMQEYACSCDVEEIFRKVRFSFEQPDGRAQMPTTERVTLTRCFYLFPGH</sequence>
<accession>P29466</accession>
<accession>B5MDZ1</accession>
<accession>Q53EY6</accession>
<accession>Q6DMQ1</accession>
<accession>Q6GSS3</accession>
<accession>Q6PI75</accession>
<accession>Q9UCN3</accession>
<dbReference type="EC" id="3.4.22.36" evidence="9 21 24"/>
<dbReference type="EMBL" id="X65019">
    <property type="protein sequence ID" value="CAA46153.1"/>
    <property type="molecule type" value="mRNA"/>
</dbReference>
<dbReference type="EMBL" id="M87507">
    <property type="protein sequence ID" value="AAA66942.1"/>
    <property type="molecule type" value="mRNA"/>
</dbReference>
<dbReference type="EMBL" id="U13697">
    <property type="protein sequence ID" value="AAC50107.1"/>
    <property type="molecule type" value="mRNA"/>
</dbReference>
<dbReference type="EMBL" id="U13698">
    <property type="protein sequence ID" value="AAC50108.1"/>
    <property type="molecule type" value="mRNA"/>
</dbReference>
<dbReference type="EMBL" id="U13699">
    <property type="protein sequence ID" value="AAC50109.1"/>
    <property type="molecule type" value="mRNA"/>
</dbReference>
<dbReference type="EMBL" id="U13700">
    <property type="protein sequence ID" value="AAC50110.1"/>
    <property type="molecule type" value="mRNA"/>
</dbReference>
<dbReference type="EMBL" id="AK223503">
    <property type="protein sequence ID" value="BAD97223.1"/>
    <property type="molecule type" value="mRNA"/>
</dbReference>
<dbReference type="EMBL" id="AP001153">
    <property type="status" value="NOT_ANNOTATED_CDS"/>
    <property type="molecule type" value="Genomic_DNA"/>
</dbReference>
<dbReference type="EMBL" id="BC041689">
    <property type="protein sequence ID" value="AAH41689.1"/>
    <property type="molecule type" value="mRNA"/>
</dbReference>
<dbReference type="EMBL" id="BC062327">
    <property type="protein sequence ID" value="AAH62327.1"/>
    <property type="molecule type" value="mRNA"/>
</dbReference>
<dbReference type="EMBL" id="AY660536">
    <property type="protein sequence ID" value="AAT72297.1"/>
    <property type="status" value="ALT_SEQ"/>
    <property type="molecule type" value="mRNA"/>
</dbReference>
<dbReference type="CCDS" id="CCDS53704.1">
    <molecule id="P29466-3"/>
</dbReference>
<dbReference type="CCDS" id="CCDS8329.1">
    <molecule id="P29466-2"/>
</dbReference>
<dbReference type="CCDS" id="CCDS8330.1">
    <molecule id="P29466-1"/>
</dbReference>
<dbReference type="CCDS" id="CCDS8331.1">
    <molecule id="P29466-4"/>
</dbReference>
<dbReference type="CCDS" id="CCDS8332.1">
    <molecule id="P29466-5"/>
</dbReference>
<dbReference type="PIR" id="A54263">
    <property type="entry name" value="A42677"/>
</dbReference>
<dbReference type="PIR" id="A56084">
    <property type="entry name" value="A56084"/>
</dbReference>
<dbReference type="PIR" id="B56084">
    <property type="entry name" value="B56084"/>
</dbReference>
<dbReference type="PIR" id="C56084">
    <property type="entry name" value="C56084"/>
</dbReference>
<dbReference type="PIR" id="D56084">
    <property type="entry name" value="D56084"/>
</dbReference>
<dbReference type="RefSeq" id="NP_001214.1">
    <molecule id="P29466-2"/>
    <property type="nucleotide sequence ID" value="NM_001223.5"/>
</dbReference>
<dbReference type="RefSeq" id="NP_001244047.1">
    <molecule id="P29466-1"/>
    <property type="nucleotide sequence ID" value="NM_001257118.3"/>
</dbReference>
<dbReference type="RefSeq" id="NP_001244048.1">
    <molecule id="P29466-2"/>
    <property type="nucleotide sequence ID" value="NM_001257119.3"/>
</dbReference>
<dbReference type="RefSeq" id="NP_150634.1">
    <molecule id="P29466-1"/>
    <property type="nucleotide sequence ID" value="NM_033292.4"/>
</dbReference>
<dbReference type="RefSeq" id="NP_150635.1">
    <molecule id="P29466-3"/>
    <property type="nucleotide sequence ID" value="NM_033293.4"/>
</dbReference>
<dbReference type="RefSeq" id="NP_150636.1">
    <molecule id="P29466-4"/>
    <property type="nucleotide sequence ID" value="NM_033294.4"/>
</dbReference>
<dbReference type="RefSeq" id="NP_150637.1">
    <molecule id="P29466-5"/>
    <property type="nucleotide sequence ID" value="NM_033295.4"/>
</dbReference>
<dbReference type="PDB" id="1BMQ">
    <property type="method" value="X-ray"/>
    <property type="resolution" value="2.50 A"/>
    <property type="chains" value="A=131-297, B=317-404"/>
</dbReference>
<dbReference type="PDB" id="1IBC">
    <property type="method" value="X-ray"/>
    <property type="resolution" value="2.73 A"/>
    <property type="chains" value="A=104-297, B=317-404"/>
</dbReference>
<dbReference type="PDB" id="1ICE">
    <property type="method" value="X-ray"/>
    <property type="resolution" value="2.60 A"/>
    <property type="chains" value="A=131-297, B=317-404"/>
</dbReference>
<dbReference type="PDB" id="1RWK">
    <property type="method" value="X-ray"/>
    <property type="resolution" value="2.30 A"/>
    <property type="chains" value="A=120-297, B=317-404"/>
</dbReference>
<dbReference type="PDB" id="1RWM">
    <property type="method" value="X-ray"/>
    <property type="resolution" value="2.70 A"/>
    <property type="chains" value="A=120-297, B=317-404"/>
</dbReference>
<dbReference type="PDB" id="1RWN">
    <property type="method" value="X-ray"/>
    <property type="resolution" value="2.00 A"/>
    <property type="chains" value="A=120-297, B=317-404"/>
</dbReference>
<dbReference type="PDB" id="1RWO">
    <property type="method" value="X-ray"/>
    <property type="resolution" value="2.10 A"/>
    <property type="chains" value="A=120-297, B=317-404"/>
</dbReference>
<dbReference type="PDB" id="1RWP">
    <property type="method" value="X-ray"/>
    <property type="resolution" value="2.20 A"/>
    <property type="chains" value="A=120-297, B=317-404"/>
</dbReference>
<dbReference type="PDB" id="1RWV">
    <property type="method" value="X-ray"/>
    <property type="resolution" value="2.10 A"/>
    <property type="chains" value="A=120-297, B=317-404"/>
</dbReference>
<dbReference type="PDB" id="1RWW">
    <property type="method" value="X-ray"/>
    <property type="resolution" value="2.80 A"/>
    <property type="chains" value="A=120-297, B=317-404"/>
</dbReference>
<dbReference type="PDB" id="1RWX">
    <property type="method" value="X-ray"/>
    <property type="resolution" value="1.85 A"/>
    <property type="chains" value="A=120-297, B=317-404"/>
</dbReference>
<dbReference type="PDB" id="1SC1">
    <property type="method" value="X-ray"/>
    <property type="resolution" value="2.60 A"/>
    <property type="chains" value="A=120-297, B=317-404"/>
</dbReference>
<dbReference type="PDB" id="1SC3">
    <property type="method" value="X-ray"/>
    <property type="resolution" value="1.80 A"/>
    <property type="chains" value="A=120-297, B=317-404"/>
</dbReference>
<dbReference type="PDB" id="1SC4">
    <property type="method" value="X-ray"/>
    <property type="resolution" value="2.10 A"/>
    <property type="chains" value="A=120-297, B=317-404"/>
</dbReference>
<dbReference type="PDB" id="2FQQ">
    <property type="method" value="X-ray"/>
    <property type="resolution" value="3.30 A"/>
    <property type="chains" value="A=120-297, B=317-404"/>
</dbReference>
<dbReference type="PDB" id="2H48">
    <property type="method" value="X-ray"/>
    <property type="resolution" value="2.20 A"/>
    <property type="chains" value="A=120-297, B=317-404"/>
</dbReference>
<dbReference type="PDB" id="2H4W">
    <property type="method" value="X-ray"/>
    <property type="resolution" value="2.00 A"/>
    <property type="chains" value="A=120-297, B=317-404"/>
</dbReference>
<dbReference type="PDB" id="2H4Y">
    <property type="method" value="X-ray"/>
    <property type="resolution" value="1.90 A"/>
    <property type="chains" value="A=120-297, B=317-404"/>
</dbReference>
<dbReference type="PDB" id="2H51">
    <property type="method" value="X-ray"/>
    <property type="resolution" value="2.10 A"/>
    <property type="chains" value="A=120-297, B=317-404"/>
</dbReference>
<dbReference type="PDB" id="2H54">
    <property type="method" value="X-ray"/>
    <property type="resolution" value="1.80 A"/>
    <property type="chains" value="A=120-297, B=317-404"/>
</dbReference>
<dbReference type="PDB" id="2HBQ">
    <property type="method" value="X-ray"/>
    <property type="resolution" value="1.80 A"/>
    <property type="chains" value="A=120-297, B=317-404"/>
</dbReference>
<dbReference type="PDB" id="2HBR">
    <property type="method" value="X-ray"/>
    <property type="resolution" value="2.20 A"/>
    <property type="chains" value="A=120-297, B=317-404"/>
</dbReference>
<dbReference type="PDB" id="2HBY">
    <property type="method" value="X-ray"/>
    <property type="resolution" value="2.10 A"/>
    <property type="chains" value="A=120-297, B=317-404"/>
</dbReference>
<dbReference type="PDB" id="2HBZ">
    <property type="method" value="X-ray"/>
    <property type="resolution" value="1.90 A"/>
    <property type="chains" value="A=120-297, B=317-404"/>
</dbReference>
<dbReference type="PDB" id="3D6F">
    <property type="method" value="X-ray"/>
    <property type="resolution" value="1.90 A"/>
    <property type="chains" value="A=120-297, B=317-404"/>
</dbReference>
<dbReference type="PDB" id="3D6H">
    <property type="method" value="X-ray"/>
    <property type="resolution" value="2.00 A"/>
    <property type="chains" value="A=120-297, B=317-404"/>
</dbReference>
<dbReference type="PDB" id="3D6M">
    <property type="method" value="X-ray"/>
    <property type="resolution" value="1.80 A"/>
    <property type="chains" value="A=120-297, B=317-404"/>
</dbReference>
<dbReference type="PDB" id="3E4C">
    <property type="method" value="X-ray"/>
    <property type="resolution" value="2.05 A"/>
    <property type="chains" value="A/B=104-404"/>
</dbReference>
<dbReference type="PDB" id="3NS7">
    <property type="method" value="X-ray"/>
    <property type="resolution" value="2.60 A"/>
    <property type="chains" value="A=136-297, B=317-404"/>
</dbReference>
<dbReference type="PDB" id="5FNA">
    <property type="method" value="EM"/>
    <property type="resolution" value="4.80 A"/>
    <property type="chains" value="A/B/C/D/E/F/G/H=2-86"/>
</dbReference>
<dbReference type="PDB" id="5MMV">
    <property type="method" value="X-ray"/>
    <property type="resolution" value="2.15 A"/>
    <property type="chains" value="A=120-297, B=317-404"/>
</dbReference>
<dbReference type="PDB" id="5MTK">
    <property type="method" value="X-ray"/>
    <property type="resolution" value="2.53 A"/>
    <property type="chains" value="A=120-297, B=317-404"/>
</dbReference>
<dbReference type="PDB" id="6BZ9">
    <property type="method" value="X-ray"/>
    <property type="resolution" value="1.80 A"/>
    <property type="chains" value="A=120-297, B=317-404"/>
</dbReference>
<dbReference type="PDB" id="6F6R">
    <property type="method" value="X-ray"/>
    <property type="resolution" value="1.80 A"/>
    <property type="chains" value="A=118-297, B=317-404"/>
</dbReference>
<dbReference type="PDB" id="6KN0">
    <property type="method" value="X-ray"/>
    <property type="resolution" value="2.79 A"/>
    <property type="chains" value="A/C=131-297, B/D=317-404"/>
</dbReference>
<dbReference type="PDB" id="6PZP">
    <property type="method" value="X-ray"/>
    <property type="resolution" value="1.94 A"/>
    <property type="chains" value="A=120-297, B=317-404"/>
</dbReference>
<dbReference type="PDB" id="6VIE">
    <property type="method" value="X-ray"/>
    <property type="resolution" value="3.40 A"/>
    <property type="chains" value="A=120-303, B=317-404"/>
</dbReference>
<dbReference type="PDB" id="7KEU">
    <property type="method" value="EM"/>
    <property type="resolution" value="3.90 A"/>
    <property type="chains" value="E/F/G/H=2-86"/>
</dbReference>
<dbReference type="PDB" id="8SV1">
    <property type="method" value="EM"/>
    <property type="resolution" value="3.50 A"/>
    <property type="chains" value="A/a=150-297, B/b=317-404"/>
</dbReference>
<dbReference type="PDB" id="8WRA">
    <property type="method" value="X-ray"/>
    <property type="resolution" value="1.45 A"/>
    <property type="chains" value="A=120-404"/>
</dbReference>
<dbReference type="PDBsum" id="1BMQ"/>
<dbReference type="PDBsum" id="1IBC"/>
<dbReference type="PDBsum" id="1ICE"/>
<dbReference type="PDBsum" id="1RWK"/>
<dbReference type="PDBsum" id="1RWM"/>
<dbReference type="PDBsum" id="1RWN"/>
<dbReference type="PDBsum" id="1RWO"/>
<dbReference type="PDBsum" id="1RWP"/>
<dbReference type="PDBsum" id="1RWV"/>
<dbReference type="PDBsum" id="1RWW"/>
<dbReference type="PDBsum" id="1RWX"/>
<dbReference type="PDBsum" id="1SC1"/>
<dbReference type="PDBsum" id="1SC3"/>
<dbReference type="PDBsum" id="1SC4"/>
<dbReference type="PDBsum" id="2FQQ"/>
<dbReference type="PDBsum" id="2H48"/>
<dbReference type="PDBsum" id="2H4W"/>
<dbReference type="PDBsum" id="2H4Y"/>
<dbReference type="PDBsum" id="2H51"/>
<dbReference type="PDBsum" id="2H54"/>
<dbReference type="PDBsum" id="2HBQ"/>
<dbReference type="PDBsum" id="2HBR"/>
<dbReference type="PDBsum" id="2HBY"/>
<dbReference type="PDBsum" id="2HBZ"/>
<dbReference type="PDBsum" id="3D6F"/>
<dbReference type="PDBsum" id="3D6H"/>
<dbReference type="PDBsum" id="3D6M"/>
<dbReference type="PDBsum" id="3E4C"/>
<dbReference type="PDBsum" id="3NS7"/>
<dbReference type="PDBsum" id="5FNA"/>
<dbReference type="PDBsum" id="5MMV"/>
<dbReference type="PDBsum" id="5MTK"/>
<dbReference type="PDBsum" id="6BZ9"/>
<dbReference type="PDBsum" id="6F6R"/>
<dbReference type="PDBsum" id="6KN0"/>
<dbReference type="PDBsum" id="6PZP"/>
<dbReference type="PDBsum" id="6VIE"/>
<dbReference type="PDBsum" id="7KEU"/>
<dbReference type="PDBsum" id="8SV1"/>
<dbReference type="PDBsum" id="8WRA"/>
<dbReference type="EMDB" id="EMD-3241"/>
<dbReference type="EMDB" id="EMD-40781"/>
<dbReference type="SMR" id="P29466"/>
<dbReference type="BioGRID" id="107284">
    <property type="interactions" value="86"/>
</dbReference>
<dbReference type="ComplexPortal" id="CPX-4082">
    <property type="entry name" value="NLRP1 inflammasome"/>
</dbReference>
<dbReference type="ComplexPortal" id="CPX-4141">
    <property type="entry name" value="NLRP3 inflammasome"/>
</dbReference>
<dbReference type="ComplexPortal" id="CPX-4142">
    <property type="entry name" value="AIM2 inflammasome"/>
</dbReference>
<dbReference type="ComplexPortal" id="CPX-4143">
    <property type="entry name" value="Pyrin inflammasome"/>
</dbReference>
<dbReference type="ComplexPortal" id="CPX-4144">
    <property type="entry name" value="NLRC4 inflammasome"/>
</dbReference>
<dbReference type="ComplexPortal" id="CPX-952">
    <property type="entry name" value="Caspase-1 complex"/>
</dbReference>
<dbReference type="CORUM" id="P29466"/>
<dbReference type="DIP" id="DIP-175N"/>
<dbReference type="FunCoup" id="P29466">
    <property type="interactions" value="348"/>
</dbReference>
<dbReference type="IntAct" id="P29466">
    <property type="interactions" value="46"/>
</dbReference>
<dbReference type="MINT" id="P29466"/>
<dbReference type="STRING" id="9606.ENSP00000433138"/>
<dbReference type="BindingDB" id="P29466"/>
<dbReference type="ChEMBL" id="CHEMBL4801"/>
<dbReference type="DrugBank" id="DB07733">
    <property type="generic name" value="1-METHYL-3-TRIFLUOROMETHYL-1H-THIENO[2,3-C]PYRAZOLE-5-CARBOXYLIC ACID (2-MERCAPTO-ETHYL)-AMIDE"/>
</dbReference>
<dbReference type="DrugBank" id="DB07916">
    <property type="generic name" value="3-{6-[(8-HYDROXY-QUINOLINE-2-CARBONYL)-AMINO]-2-THIOPHEN-2-YL-HEXANOYLAMINO}-4-OXO-BUTYRI ACID"/>
</dbReference>
<dbReference type="DrugBank" id="DB00945">
    <property type="generic name" value="Acetylsalicylic acid"/>
</dbReference>
<dbReference type="DrugBank" id="DB05408">
    <property type="generic name" value="Emricasan"/>
</dbReference>
<dbReference type="DrugBank" id="DB05301">
    <property type="generic name" value="LAX-101"/>
</dbReference>
<dbReference type="DrugBank" id="DB01017">
    <property type="generic name" value="Minocycline"/>
</dbReference>
<dbReference type="DrugBank" id="DB12720">
    <property type="generic name" value="Nivocasan"/>
</dbReference>
<dbReference type="DrugBank" id="DB04875">
    <property type="generic name" value="Pralnacasan"/>
</dbReference>
<dbReference type="DrugBank" id="DB05507">
    <property type="generic name" value="VX-765"/>
</dbReference>
<dbReference type="DrugBank" id="DB07744">
    <property type="generic name" value="Z-Val-Ala-Asp fluoromethyl ketone"/>
</dbReference>
<dbReference type="DrugCentral" id="P29466"/>
<dbReference type="GuidetoPHARMACOLOGY" id="1617"/>
<dbReference type="MEROPS" id="C14.001"/>
<dbReference type="iPTMnet" id="P29466"/>
<dbReference type="PhosphoSitePlus" id="P29466"/>
<dbReference type="BioMuta" id="CASP1"/>
<dbReference type="DMDM" id="266321"/>
<dbReference type="jPOST" id="P29466"/>
<dbReference type="MassIVE" id="P29466"/>
<dbReference type="PaxDb" id="9606-ENSP00000433138"/>
<dbReference type="PeptideAtlas" id="P29466"/>
<dbReference type="ProteomicsDB" id="54571">
    <molecule id="P29466-1"/>
</dbReference>
<dbReference type="ProteomicsDB" id="54572">
    <molecule id="P29466-2"/>
</dbReference>
<dbReference type="ProteomicsDB" id="54573">
    <molecule id="P29466-3"/>
</dbReference>
<dbReference type="ProteomicsDB" id="54574">
    <molecule id="P29466-4"/>
</dbReference>
<dbReference type="ProteomicsDB" id="54575">
    <molecule id="P29466-5"/>
</dbReference>
<dbReference type="Pumba" id="P29466"/>
<dbReference type="Antibodypedia" id="1075">
    <property type="antibodies" value="1118 antibodies from 48 providers"/>
</dbReference>
<dbReference type="DNASU" id="834"/>
<dbReference type="Ensembl" id="ENST00000436863.7">
    <molecule id="P29466-1"/>
    <property type="protein sequence ID" value="ENSP00000410076.3"/>
    <property type="gene ID" value="ENSG00000137752.25"/>
</dbReference>
<dbReference type="Ensembl" id="ENST00000525825.6">
    <molecule id="P29466-2"/>
    <property type="protein sequence ID" value="ENSP00000434779.1"/>
    <property type="gene ID" value="ENSG00000137752.25"/>
</dbReference>
<dbReference type="Ensembl" id="ENST00000526568.5">
    <molecule id="P29466-3"/>
    <property type="protein sequence ID" value="ENSP00000434250.1"/>
    <property type="gene ID" value="ENSG00000137752.25"/>
</dbReference>
<dbReference type="Ensembl" id="ENST00000531166.5">
    <molecule id="P29466-5"/>
    <property type="protein sequence ID" value="ENSP00000434303.1"/>
    <property type="gene ID" value="ENSG00000137752.25"/>
</dbReference>
<dbReference type="Ensembl" id="ENST00000533400.6">
    <molecule id="P29466-1"/>
    <property type="protein sequence ID" value="ENSP00000433138.1"/>
    <property type="gene ID" value="ENSG00000137752.25"/>
</dbReference>
<dbReference type="Ensembl" id="ENST00000534497.5">
    <molecule id="P29466-4"/>
    <property type="protein sequence ID" value="ENSP00000436875.1"/>
    <property type="gene ID" value="ENSG00000137752.25"/>
</dbReference>
<dbReference type="Ensembl" id="ENST00000695719.1">
    <molecule id="P29466-2"/>
    <property type="protein sequence ID" value="ENSP00000512117.1"/>
    <property type="gene ID" value="ENSG00000137752.25"/>
</dbReference>
<dbReference type="GeneID" id="834"/>
<dbReference type="KEGG" id="hsa:834"/>
<dbReference type="MANE-Select" id="ENST00000533400.6">
    <property type="protein sequence ID" value="ENSP00000433138.1"/>
    <property type="RefSeq nucleotide sequence ID" value="NM_001257118.3"/>
    <property type="RefSeq protein sequence ID" value="NP_001244047.1"/>
</dbReference>
<dbReference type="UCSC" id="uc001pig.5">
    <molecule id="P29466-1"/>
    <property type="organism name" value="human"/>
</dbReference>
<dbReference type="AGR" id="HGNC:1499"/>
<dbReference type="CTD" id="834"/>
<dbReference type="DisGeNET" id="834"/>
<dbReference type="GeneCards" id="CASP1"/>
<dbReference type="HGNC" id="HGNC:1499">
    <property type="gene designation" value="CASP1"/>
</dbReference>
<dbReference type="HPA" id="ENSG00000137752">
    <property type="expression patterns" value="Tissue enhanced (intestine, lymphoid tissue)"/>
</dbReference>
<dbReference type="MIM" id="147678">
    <property type="type" value="gene"/>
</dbReference>
<dbReference type="neXtProt" id="NX_P29466"/>
<dbReference type="OpenTargets" id="ENSG00000137752"/>
<dbReference type="PharmGKB" id="PA26083"/>
<dbReference type="VEuPathDB" id="HostDB:ENSG00000137752"/>
<dbReference type="eggNOG" id="KOG3573">
    <property type="taxonomic scope" value="Eukaryota"/>
</dbReference>
<dbReference type="GeneTree" id="ENSGT00940000159114"/>
<dbReference type="HOGENOM" id="CLU_036904_0_0_1"/>
<dbReference type="InParanoid" id="P29466"/>
<dbReference type="OMA" id="QYIVQVF"/>
<dbReference type="OrthoDB" id="6097640at2759"/>
<dbReference type="PAN-GO" id="P29466">
    <property type="GO annotations" value="6 GO annotations based on evolutionary models"/>
</dbReference>
<dbReference type="PhylomeDB" id="P29466"/>
<dbReference type="TreeFam" id="TF102023"/>
<dbReference type="BioCyc" id="MetaCyc:HS06387-MONOMER"/>
<dbReference type="BRENDA" id="3.4.22.36">
    <property type="organism ID" value="2681"/>
</dbReference>
<dbReference type="PathwayCommons" id="P29466"/>
<dbReference type="Reactome" id="R-HSA-168638">
    <property type="pathway name" value="NOD1/2 Signaling Pathway"/>
</dbReference>
<dbReference type="Reactome" id="R-HSA-448706">
    <property type="pathway name" value="Interleukin-1 processing"/>
</dbReference>
<dbReference type="Reactome" id="R-HSA-5620971">
    <property type="pathway name" value="Pyroptosis"/>
</dbReference>
<dbReference type="Reactome" id="R-HSA-6803207">
    <property type="pathway name" value="TP53 Regulates Transcription of Caspase Activators and Caspases"/>
</dbReference>
<dbReference type="Reactome" id="R-HSA-844456">
    <property type="pathway name" value="The NLRP3 inflammasome"/>
</dbReference>
<dbReference type="Reactome" id="R-HSA-844615">
    <property type="pathway name" value="The AIM2 inflammasome"/>
</dbReference>
<dbReference type="Reactome" id="R-HSA-844623">
    <property type="pathway name" value="The IPAF inflammasome"/>
</dbReference>
<dbReference type="Reactome" id="R-HSA-9008059">
    <property type="pathway name" value="Interleukin-37 signaling"/>
</dbReference>
<dbReference type="Reactome" id="R-HSA-9660826">
    <property type="pathway name" value="Purinergic signaling in leishmaniasis infection"/>
</dbReference>
<dbReference type="Reactome" id="R-HSA-9692916">
    <property type="pathway name" value="SARS-CoV-1 activates/modulates innate immune responses"/>
</dbReference>
<dbReference type="SABIO-RK" id="P29466"/>
<dbReference type="SignaLink" id="P29466"/>
<dbReference type="SIGNOR" id="P29466"/>
<dbReference type="BioGRID-ORCS" id="834">
    <property type="hits" value="9 hits in 1150 CRISPR screens"/>
</dbReference>
<dbReference type="ChiTaRS" id="CASP1">
    <property type="organism name" value="human"/>
</dbReference>
<dbReference type="EvolutionaryTrace" id="P29466"/>
<dbReference type="GeneWiki" id="Caspase_1"/>
<dbReference type="GenomeRNAi" id="834"/>
<dbReference type="Pharos" id="P29466">
    <property type="development level" value="Tchem"/>
</dbReference>
<dbReference type="PRO" id="PR:P29466"/>
<dbReference type="Proteomes" id="UP000005640">
    <property type="component" value="Chromosome 11"/>
</dbReference>
<dbReference type="RNAct" id="P29466">
    <property type="molecule type" value="protein"/>
</dbReference>
<dbReference type="Bgee" id="ENSG00000137752">
    <property type="expression patterns" value="Expressed in monocyte and 181 other cell types or tissues"/>
</dbReference>
<dbReference type="ExpressionAtlas" id="P29466">
    <property type="expression patterns" value="baseline and differential"/>
</dbReference>
<dbReference type="GO" id="GO:0097169">
    <property type="term" value="C:AIM2 inflammasome complex"/>
    <property type="evidence" value="ECO:0000314"/>
    <property type="project" value="UniProtKB"/>
</dbReference>
<dbReference type="GO" id="GO:0061702">
    <property type="term" value="C:canonical inflammasome complex"/>
    <property type="evidence" value="ECO:0000353"/>
    <property type="project" value="ComplexPortal"/>
</dbReference>
<dbReference type="GO" id="GO:0005737">
    <property type="term" value="C:cytoplasm"/>
    <property type="evidence" value="ECO:0000314"/>
    <property type="project" value="UniProt"/>
</dbReference>
<dbReference type="GO" id="GO:0005829">
    <property type="term" value="C:cytosol"/>
    <property type="evidence" value="ECO:0000314"/>
    <property type="project" value="UniProt"/>
</dbReference>
<dbReference type="GO" id="GO:0072557">
    <property type="term" value="C:IPAF inflammasome complex"/>
    <property type="evidence" value="ECO:0000250"/>
    <property type="project" value="UniProtKB"/>
</dbReference>
<dbReference type="GO" id="GO:0005874">
    <property type="term" value="C:microtubule"/>
    <property type="evidence" value="ECO:0000303"/>
    <property type="project" value="ComplexPortal"/>
</dbReference>
<dbReference type="GO" id="GO:0072558">
    <property type="term" value="C:NLRP1 inflammasome complex"/>
    <property type="evidence" value="ECO:0000314"/>
    <property type="project" value="UniProtKB"/>
</dbReference>
<dbReference type="GO" id="GO:0072559">
    <property type="term" value="C:NLRP3 inflammasome complex"/>
    <property type="evidence" value="ECO:0000314"/>
    <property type="project" value="UniProtKB"/>
</dbReference>
<dbReference type="GO" id="GO:0005730">
    <property type="term" value="C:nucleolus"/>
    <property type="evidence" value="ECO:0000303"/>
    <property type="project" value="ComplexPortal"/>
</dbReference>
<dbReference type="GO" id="GO:0005886">
    <property type="term" value="C:plasma membrane"/>
    <property type="evidence" value="ECO:0007669"/>
    <property type="project" value="UniProtKB-SubCell"/>
</dbReference>
<dbReference type="GO" id="GO:0097179">
    <property type="term" value="C:protease inhibitor complex"/>
    <property type="evidence" value="ECO:0000315"/>
    <property type="project" value="UniProtKB"/>
</dbReference>
<dbReference type="GO" id="GO:0032991">
    <property type="term" value="C:protein-containing complex"/>
    <property type="evidence" value="ECO:0000314"/>
    <property type="project" value="UniProtKB"/>
</dbReference>
<dbReference type="GO" id="GO:0050700">
    <property type="term" value="F:CARD domain binding"/>
    <property type="evidence" value="ECO:0000353"/>
    <property type="project" value="UniProtKB"/>
</dbReference>
<dbReference type="GO" id="GO:0008656">
    <property type="term" value="F:cysteine-type endopeptidase activator activity involved in apoptotic process"/>
    <property type="evidence" value="ECO:0000304"/>
    <property type="project" value="ProtInc"/>
</dbReference>
<dbReference type="GO" id="GO:0004197">
    <property type="term" value="F:cysteine-type endopeptidase activity"/>
    <property type="evidence" value="ECO:0000314"/>
    <property type="project" value="UniProtKB"/>
</dbReference>
<dbReference type="GO" id="GO:0019955">
    <property type="term" value="F:cytokine binding"/>
    <property type="evidence" value="ECO:0000353"/>
    <property type="project" value="HGNC-UCL"/>
</dbReference>
<dbReference type="GO" id="GO:0004175">
    <property type="term" value="F:endopeptidase activity"/>
    <property type="evidence" value="ECO:0000314"/>
    <property type="project" value="ParkinsonsUK-UCL"/>
</dbReference>
<dbReference type="GO" id="GO:0042802">
    <property type="term" value="F:identical protein binding"/>
    <property type="evidence" value="ECO:0000315"/>
    <property type="project" value="UniProtKB"/>
</dbReference>
<dbReference type="GO" id="GO:0019900">
    <property type="term" value="F:kinase binding"/>
    <property type="evidence" value="ECO:0000353"/>
    <property type="project" value="UniProtKB"/>
</dbReference>
<dbReference type="GO" id="GO:0140970">
    <property type="term" value="P:AIM2 inflammasome complex assembly"/>
    <property type="evidence" value="ECO:0000314"/>
    <property type="project" value="UniProt"/>
</dbReference>
<dbReference type="GO" id="GO:0006915">
    <property type="term" value="P:apoptotic process"/>
    <property type="evidence" value="ECO:0000304"/>
    <property type="project" value="ProtInc"/>
</dbReference>
<dbReference type="GO" id="GO:0071222">
    <property type="term" value="P:cellular response to lipopolysaccharide"/>
    <property type="evidence" value="ECO:0000314"/>
    <property type="project" value="UniProt"/>
</dbReference>
<dbReference type="GO" id="GO:0071260">
    <property type="term" value="P:cellular response to mechanical stimulus"/>
    <property type="evidence" value="ECO:0000270"/>
    <property type="project" value="UniProtKB"/>
</dbReference>
<dbReference type="GO" id="GO:0071346">
    <property type="term" value="P:cellular response to type II interferon"/>
    <property type="evidence" value="ECO:0000315"/>
    <property type="project" value="UniProtKB"/>
</dbReference>
<dbReference type="GO" id="GO:0140447">
    <property type="term" value="P:cytokine precursor processing"/>
    <property type="evidence" value="ECO:0000316"/>
    <property type="project" value="ARUK-UCL"/>
</dbReference>
<dbReference type="GO" id="GO:0042742">
    <property type="term" value="P:defense response to bacterium"/>
    <property type="evidence" value="ECO:0000250"/>
    <property type="project" value="UniProt"/>
</dbReference>
<dbReference type="GO" id="GO:0051607">
    <property type="term" value="P:defense response to virus"/>
    <property type="evidence" value="ECO:0000303"/>
    <property type="project" value="ComplexPortal"/>
</dbReference>
<dbReference type="GO" id="GO:0046456">
    <property type="term" value="P:icosanoid biosynthetic process"/>
    <property type="evidence" value="ECO:0000303"/>
    <property type="project" value="ComplexPortal"/>
</dbReference>
<dbReference type="GO" id="GO:0007231">
    <property type="term" value="P:osmosensory signaling pathway"/>
    <property type="evidence" value="ECO:0000303"/>
    <property type="project" value="ComplexPortal"/>
</dbReference>
<dbReference type="GO" id="GO:0002221">
    <property type="term" value="P:pattern recognition receptor signaling pathway"/>
    <property type="evidence" value="ECO:0000303"/>
    <property type="project" value="ComplexPortal"/>
</dbReference>
<dbReference type="GO" id="GO:0043123">
    <property type="term" value="P:positive regulation of canonical NF-kappaB signal transduction"/>
    <property type="evidence" value="ECO:0000315"/>
    <property type="project" value="UniProtKB"/>
</dbReference>
<dbReference type="GO" id="GO:0050729">
    <property type="term" value="P:positive regulation of inflammatory response"/>
    <property type="evidence" value="ECO:0000314"/>
    <property type="project" value="ComplexPortal"/>
</dbReference>
<dbReference type="GO" id="GO:0032731">
    <property type="term" value="P:positive regulation of interleukin-1 beta production"/>
    <property type="evidence" value="ECO:0000314"/>
    <property type="project" value="UniProtKB"/>
</dbReference>
<dbReference type="GO" id="GO:0032741">
    <property type="term" value="P:positive regulation of interleukin-18 production"/>
    <property type="evidence" value="ECO:0000314"/>
    <property type="project" value="UniProt"/>
</dbReference>
<dbReference type="GO" id="GO:1903265">
    <property type="term" value="P:positive regulation of tumor necrosis factor-mediated signaling pathway"/>
    <property type="evidence" value="ECO:0000315"/>
    <property type="project" value="UniProtKB"/>
</dbReference>
<dbReference type="GO" id="GO:0016540">
    <property type="term" value="P:protein autoprocessing"/>
    <property type="evidence" value="ECO:0000314"/>
    <property type="project" value="UniProtKB"/>
</dbReference>
<dbReference type="GO" id="GO:0051604">
    <property type="term" value="P:protein maturation"/>
    <property type="evidence" value="ECO:0000314"/>
    <property type="project" value="UniProt"/>
</dbReference>
<dbReference type="GO" id="GO:0006508">
    <property type="term" value="P:proteolysis"/>
    <property type="evidence" value="ECO:0000314"/>
    <property type="project" value="UniProtKB"/>
</dbReference>
<dbReference type="GO" id="GO:0070269">
    <property type="term" value="P:pyroptotic inflammatory response"/>
    <property type="evidence" value="ECO:0000314"/>
    <property type="project" value="UniProtKB"/>
</dbReference>
<dbReference type="GO" id="GO:0042981">
    <property type="term" value="P:regulation of apoptotic process"/>
    <property type="evidence" value="ECO:0007669"/>
    <property type="project" value="InterPro"/>
</dbReference>
<dbReference type="GO" id="GO:0050727">
    <property type="term" value="P:regulation of inflammatory response"/>
    <property type="evidence" value="ECO:0000314"/>
    <property type="project" value="UniProtKB"/>
</dbReference>
<dbReference type="GO" id="GO:0007165">
    <property type="term" value="P:signal transduction"/>
    <property type="evidence" value="ECO:0000304"/>
    <property type="project" value="ProtInc"/>
</dbReference>
<dbReference type="GO" id="GO:0140448">
    <property type="term" value="P:signaling receptor ligand precursor processing"/>
    <property type="evidence" value="ECO:0000316"/>
    <property type="project" value="ARUK-UCL"/>
</dbReference>
<dbReference type="CDD" id="cd08325">
    <property type="entry name" value="CARD_CASP1-like"/>
    <property type="match status" value="1"/>
</dbReference>
<dbReference type="CDD" id="cd00032">
    <property type="entry name" value="CASc"/>
    <property type="match status" value="1"/>
</dbReference>
<dbReference type="FunFam" id="1.10.533.10:FF:000031">
    <property type="entry name" value="Caspase 1, isoform CRA_b"/>
    <property type="match status" value="1"/>
</dbReference>
<dbReference type="FunFam" id="3.40.50.1460:FF:000007">
    <property type="entry name" value="Caspase-1"/>
    <property type="match status" value="1"/>
</dbReference>
<dbReference type="Gene3D" id="3.40.50.1460">
    <property type="match status" value="1"/>
</dbReference>
<dbReference type="Gene3D" id="1.10.533.10">
    <property type="entry name" value="Death Domain, Fas"/>
    <property type="match status" value="1"/>
</dbReference>
<dbReference type="InterPro" id="IPR001315">
    <property type="entry name" value="CARD"/>
</dbReference>
<dbReference type="InterPro" id="IPR029030">
    <property type="entry name" value="Caspase-like_dom_sf"/>
</dbReference>
<dbReference type="InterPro" id="IPR033139">
    <property type="entry name" value="Caspase_cys_AS"/>
</dbReference>
<dbReference type="InterPro" id="IPR016129">
    <property type="entry name" value="Caspase_his_AS"/>
</dbReference>
<dbReference type="InterPro" id="IPR011029">
    <property type="entry name" value="DEATH-like_dom_sf"/>
</dbReference>
<dbReference type="InterPro" id="IPR002398">
    <property type="entry name" value="Pept_C14"/>
</dbReference>
<dbReference type="InterPro" id="IPR011600">
    <property type="entry name" value="Pept_C14_caspase"/>
</dbReference>
<dbReference type="InterPro" id="IPR002138">
    <property type="entry name" value="Pept_C14_p10"/>
</dbReference>
<dbReference type="InterPro" id="IPR001309">
    <property type="entry name" value="Pept_C14_p20"/>
</dbReference>
<dbReference type="InterPro" id="IPR015917">
    <property type="entry name" value="Pept_C14A"/>
</dbReference>
<dbReference type="PANTHER" id="PTHR47901">
    <property type="entry name" value="CASPASE RECRUITMENT DOMAIN-CONTAINING PROTEIN 18"/>
    <property type="match status" value="1"/>
</dbReference>
<dbReference type="PANTHER" id="PTHR47901:SF3">
    <property type="entry name" value="CASPASE-1"/>
    <property type="match status" value="1"/>
</dbReference>
<dbReference type="Pfam" id="PF00619">
    <property type="entry name" value="CARD"/>
    <property type="match status" value="1"/>
</dbReference>
<dbReference type="Pfam" id="PF00656">
    <property type="entry name" value="Peptidase_C14"/>
    <property type="match status" value="1"/>
</dbReference>
<dbReference type="PIRSF" id="PIRSF038001">
    <property type="entry name" value="Caspase_ICE"/>
    <property type="match status" value="1"/>
</dbReference>
<dbReference type="PRINTS" id="PR00376">
    <property type="entry name" value="IL1BCENZYME"/>
</dbReference>
<dbReference type="SMART" id="SM00114">
    <property type="entry name" value="CARD"/>
    <property type="match status" value="1"/>
</dbReference>
<dbReference type="SMART" id="SM00115">
    <property type="entry name" value="CASc"/>
    <property type="match status" value="1"/>
</dbReference>
<dbReference type="SUPFAM" id="SSF52129">
    <property type="entry name" value="Caspase-like"/>
    <property type="match status" value="1"/>
</dbReference>
<dbReference type="SUPFAM" id="SSF47986">
    <property type="entry name" value="DEATH domain"/>
    <property type="match status" value="1"/>
</dbReference>
<dbReference type="PROSITE" id="PS50209">
    <property type="entry name" value="CARD"/>
    <property type="match status" value="1"/>
</dbReference>
<dbReference type="PROSITE" id="PS01122">
    <property type="entry name" value="CASPASE_CYS"/>
    <property type="match status" value="1"/>
</dbReference>
<dbReference type="PROSITE" id="PS01121">
    <property type="entry name" value="CASPASE_HIS"/>
    <property type="match status" value="1"/>
</dbReference>
<dbReference type="PROSITE" id="PS50207">
    <property type="entry name" value="CASPASE_P10"/>
    <property type="match status" value="1"/>
</dbReference>
<dbReference type="PROSITE" id="PS50208">
    <property type="entry name" value="CASPASE_P20"/>
    <property type="match status" value="1"/>
</dbReference>
<comment type="function">
    <text evidence="6 8 9 12 13 14 15 18 19 20 21 22 24">Thiol protease involved in a variety of inflammatory processes by proteolytically cleaving other proteins, such as the precursors of the inflammatory cytokines interleukin-1 beta (IL1B) and interleukin 18 (IL18) as well as the pyroptosis inducer Gasdermin-D (GSDMD), into active mature peptides (PubMed:15326478, PubMed:15498465, PubMed:1574116, PubMed:26375003, PubMed:32051255, PubMed:37993714, PubMed:7876192, PubMed:9334240). Plays a key role in cell immunity as an inflammatory response initiator: once activated through formation of an inflammasome complex, it initiates a pro-inflammatory response through the cleavage of the two inflammatory cytokines IL1B and IL18, releasing the mature cytokines which are involved in a variety of inflammatory processes (PubMed:15326478, PubMed:15498465, PubMed:1574116, PubMed:32051255, PubMed:7876192). Cleaves a tetrapeptide after an Asp residue at position P1 (PubMed:15498465, PubMed:1574116, PubMed:7876192). Also initiates pyroptosis, a programmed lytic cell death pathway, through cleavage of GSDMD (PubMed:26375003). In contrast to cleavage of interleukin IL1B, recognition and cleavage of GSDMD is not strictly dependent on the consensus cleavage site but depends on an exosite interface on CASP1 that recognizes and binds the Gasdermin-D, C-terminal (GSDMD-CT) part (PubMed:32051255, PubMed:32109412, PubMed:32553275). Cleaves and activates CASP7 in response to bacterial infection, promoting plasma membrane repair (PubMed:22464733). Upon inflammasome activation, during DNA virus infection but not RNA virus challenge, controls antiviral immunity through the cleavage of CGAS, rendering it inactive (PubMed:28314590). In apoptotic cells, cleaves SPHK2 which is released from cells and remains enzymatically active extracellularly (PubMed:20197547).</text>
</comment>
<comment type="function">
    <molecule>Isoform Delta</molecule>
    <text evidence="22">Apoptosis inactive.</text>
</comment>
<comment type="function">
    <molecule>Isoform Epsilon</molecule>
    <text evidence="22">Apoptosis inactive.</text>
</comment>
<comment type="catalytic activity">
    <reaction evidence="9 13 21 24">
        <text>Strict requirement for an Asp residue at position P1 and has a preferred cleavage sequence of Tyr-Val-Ala-Asp-|-.</text>
        <dbReference type="EC" id="3.4.22.36"/>
    </reaction>
</comment>
<comment type="activity regulation">
    <text evidence="4">(Microbial infection) Specifically inhibited by the cowpox virus Crma protein.</text>
</comment>
<comment type="subunit">
    <text evidence="1 3 5 7 10 17 18 19 20 23 25">Heterotetramer that consists of two anti-parallel arranged heterodimers, each one formed by a 20 kDa (Caspase-1 subunit p20) and a 10 kDa (Caspase-1 subunit p10) subunit (PubMed:32109412, PubMed:32553275, PubMed:8044845, PubMed:9987822). May be a component of the inflammasome, a protein complex which also includes PYCARD, CARD8 and NLRP2 and whose function would be the activation of pro-inflammatory caspases (PubMed:15030775, PubMed:33420033). Component of the AIM2 PANoptosome complex, a multiprotein complex that drives inflammatory cell death (PANoptosis) (By similarity). Interacts with CARD8; interacts with the released C-terminus of CARD8 which forms an inflammasome and directly activates CASP1 to promote pyroptosis (PubMed:32051255). Both the p10 and p20 subunits interact with MEFV (PubMed:16785446). Interacts with CARD17P/INCA and CARD18 (PubMed:11051551, PubMed:15383541). Interacts with SERPINB1; this interaction regulates CASP1 activity (PubMed:30692621).</text>
</comment>
<comment type="subunit">
    <molecule>Caspase-1 subunit p20</molecule>
    <text evidence="19 20 22 23">Heterotetramer that consists of two anti-parallel arranged heterodimers, each one formed by a 20 kDa (Caspase-1 subunit p20) and a 10 kDa (Caspase-1 subunit p10) subunit (PubMed:32109412, PubMed:32553275, PubMed:8044845). Can form a heterodimer with isoform epsilon which then has an inhibitory effect (PubMed:7876192).</text>
</comment>
<comment type="subunit">
    <molecule>Caspase-1 subunit p10</molecule>
    <text evidence="19 20 23">Heterotetramer that consists of two anti-parallel arranged heterodimers, each one formed by a 20 kDa (Caspase-1 subunit p20) and a 10 kDa (Caspase-1 subunit p10) subunit.</text>
</comment>
<comment type="subunit">
    <molecule>Isoform Epsilon</molecule>
    <text evidence="22">Can form a heterodimer with Caspase-1 subunit p20 which then has an inhibitory effect.</text>
</comment>
<comment type="interaction">
    <interactant intactId="EBI-516667">
        <id>P29466</id>
    </interactant>
    <interactant intactId="EBI-16203934">
        <id>Q5XLA6</id>
        <label>CARD17P</label>
    </interactant>
    <organismsDiffer>false</organismsDiffer>
    <experiments>3</experiments>
</comment>
<comment type="interaction">
    <interactant intactId="EBI-516667">
        <id>P29466</id>
    </interactant>
    <interactant intactId="EBI-16203975">
        <id>P57730</id>
        <label>CARD18</label>
    </interactant>
    <organismsDiffer>false</organismsDiffer>
    <experiments>3</experiments>
</comment>
<comment type="interaction">
    <interactant intactId="EBI-516667">
        <id>P29466</id>
    </interactant>
    <interactant intactId="EBI-516667">
        <id>P29466</id>
        <label>CASP1</label>
    </interactant>
    <organismsDiffer>false</organismsDiffer>
    <experiments>2</experiments>
</comment>
<comment type="interaction">
    <interactant intactId="EBI-516667">
        <id>P29466</id>
    </interactant>
    <interactant intactId="EBI-977447">
        <id>P09038</id>
        <label>FGF2</label>
    </interactant>
    <organismsDiffer>false</organismsDiffer>
    <experiments>2</experiments>
</comment>
<comment type="interaction">
    <interactant intactId="EBI-516667">
        <id>P29466</id>
    </interactant>
    <interactant intactId="EBI-2798865">
        <id>P57764</id>
        <label>GSDMD</label>
    </interactant>
    <organismsDiffer>false</organismsDiffer>
    <experiments>4</experiments>
</comment>
<comment type="interaction">
    <interactant intactId="EBI-516667">
        <id>P29466</id>
    </interactant>
    <interactant intactId="EBI-1749782">
        <id>P01583</id>
        <label>IL1A</label>
    </interactant>
    <organismsDiffer>false</organismsDiffer>
    <experiments>3</experiments>
</comment>
<comment type="interaction">
    <interactant intactId="EBI-516667">
        <id>P29466</id>
    </interactant>
    <interactant intactId="EBI-7644532">
        <id>O15553</id>
        <label>MEFV</label>
    </interactant>
    <organismsDiffer>false</organismsDiffer>
    <experiments>2</experiments>
</comment>
<comment type="interaction">
    <interactant intactId="EBI-516667">
        <id>P29466</id>
    </interactant>
    <interactant intactId="EBI-15588296">
        <id>O15553-2</id>
        <label>MEFV</label>
    </interactant>
    <organismsDiffer>false</organismsDiffer>
    <experiments>3</experiments>
</comment>
<comment type="interaction">
    <interactant intactId="EBI-516667">
        <id>P29466</id>
    </interactant>
    <interactant intactId="EBI-1222527">
        <id>Q9NPP4</id>
        <label>NLRC4</label>
    </interactant>
    <organismsDiffer>false</organismsDiffer>
    <experiments>4</experiments>
</comment>
<comment type="interaction">
    <interactant intactId="EBI-516667">
        <id>P29466</id>
    </interactant>
    <interactant intactId="EBI-1220518">
        <id>Q9C000</id>
        <label>NLRP1</label>
    </interactant>
    <organismsDiffer>false</organismsDiffer>
    <experiments>3</experiments>
</comment>
<comment type="interaction">
    <interactant intactId="EBI-516667">
        <id>P29466</id>
    </interactant>
    <interactant intactId="EBI-7445625">
        <id>Q9HC29</id>
        <label>NOD2</label>
    </interactant>
    <organismsDiffer>false</organismsDiffer>
    <experiments>4</experiments>
</comment>
<comment type="interaction">
    <interactant intactId="EBI-516667">
        <id>P29466</id>
    </interactant>
    <interactant intactId="EBI-751215">
        <id>Q9ULZ3</id>
        <label>PYCARD</label>
    </interactant>
    <organismsDiffer>false</organismsDiffer>
    <experiments>11</experiments>
</comment>
<comment type="interaction">
    <interactant intactId="EBI-516667">
        <id>P29466</id>
    </interactant>
    <interactant intactId="EBI-528654">
        <id>P58753-2</id>
        <label>TIRAP</label>
    </interactant>
    <organismsDiffer>false</organismsDiffer>
    <experiments>5</experiments>
</comment>
<comment type="interaction">
    <interactant intactId="EBI-516667">
        <id>P29466</id>
    </interactant>
    <interactant intactId="EBI-2107455">
        <id>Q08AM6</id>
        <label>VAC14</label>
    </interactant>
    <organismsDiffer>false</organismsDiffer>
    <experiments>4</experiments>
</comment>
<comment type="interaction">
    <interactant intactId="EBI-12248206">
        <id>P29466-3</id>
    </interactant>
    <interactant intactId="EBI-77613">
        <id>P05067</id>
        <label>APP</label>
    </interactant>
    <organismsDiffer>false</organismsDiffer>
    <experiments>3</experiments>
</comment>
<comment type="interaction">
    <interactant intactId="EBI-12248206">
        <id>P29466-3</id>
    </interactant>
    <interactant intactId="EBI-946046">
        <id>P54252</id>
        <label>ATXN3</label>
    </interactant>
    <organismsDiffer>false</organismsDiffer>
    <experiments>9</experiments>
</comment>
<comment type="interaction">
    <interactant intactId="EBI-12248206">
        <id>P29466-3</id>
    </interactant>
    <interactant intactId="EBI-718504">
        <id>Q13867</id>
        <label>BLMH</label>
    </interactant>
    <organismsDiffer>false</organismsDiffer>
    <experiments>3</experiments>
</comment>
<comment type="interaction">
    <interactant intactId="EBI-12248206">
        <id>P29466-3</id>
    </interactant>
    <interactant intactId="EBI-744302">
        <id>P14136</id>
        <label>GFAP</label>
    </interactant>
    <organismsDiffer>false</organismsDiffer>
    <experiments>3</experiments>
</comment>
<comment type="interaction">
    <interactant intactId="EBI-12248206">
        <id>P29466-3</id>
    </interactant>
    <interactant intactId="EBI-466029">
        <id>P42858</id>
        <label>HTT</label>
    </interactant>
    <organismsDiffer>false</organismsDiffer>
    <experiments>3</experiments>
</comment>
<comment type="interaction">
    <interactant intactId="EBI-12248206">
        <id>P29466-3</id>
    </interactant>
    <interactant intactId="EBI-12345753">
        <id>Q13387-4</id>
        <label>MAPK8IP2</label>
    </interactant>
    <organismsDiffer>false</organismsDiffer>
    <experiments>3</experiments>
</comment>
<comment type="interaction">
    <interactant intactId="EBI-12248206">
        <id>P29466-3</id>
    </interactant>
    <interactant intactId="EBI-9090282">
        <id>P27986-2</id>
        <label>PIK3R1</label>
    </interactant>
    <organismsDiffer>false</organismsDiffer>
    <experiments>3</experiments>
</comment>
<comment type="interaction">
    <interactant intactId="EBI-12248206">
        <id>P29466-3</id>
    </interactant>
    <interactant intactId="EBI-2865290">
        <id>O14494</id>
        <label>PLPP1</label>
    </interactant>
    <organismsDiffer>false</organismsDiffer>
    <experiments>3</experiments>
</comment>
<comment type="interaction">
    <interactant intactId="EBI-12248206">
        <id>P29466-3</id>
    </interactant>
    <interactant intactId="EBI-21251460">
        <id>O60260-5</id>
        <label>PRKN</label>
    </interactant>
    <organismsDiffer>false</organismsDiffer>
    <experiments>6</experiments>
</comment>
<comment type="interaction">
    <interactant intactId="EBI-12248206">
        <id>P29466-3</id>
    </interactant>
    <interactant intactId="EBI-2010251">
        <id>P49810</id>
        <label>PSEN2</label>
    </interactant>
    <organismsDiffer>false</organismsDiffer>
    <experiments>3</experiments>
</comment>
<comment type="interaction">
    <interactant intactId="EBI-12248206">
        <id>P29466-3</id>
    </interactant>
    <interactant intactId="EBI-347161">
        <id>P84022</id>
        <label>SMAD3</label>
    </interactant>
    <organismsDiffer>false</organismsDiffer>
    <experiments>3</experiments>
</comment>
<comment type="interaction">
    <interactant intactId="EBI-12248206">
        <id>P29466-3</id>
    </interactant>
    <interactant intactId="EBI-25832057">
        <id>Q9BX74</id>
        <label>TM2D1</label>
    </interactant>
    <organismsDiffer>false</organismsDiffer>
    <experiments>3</experiments>
</comment>
<comment type="interaction">
    <interactant intactId="EBI-12248206">
        <id>P29466-3</id>
    </interactant>
    <interactant intactId="EBI-12117154">
        <id>O60784-2</id>
        <label>TOM1</label>
    </interactant>
    <organismsDiffer>false</organismsDiffer>
    <experiments>3</experiments>
</comment>
<comment type="interaction">
    <interactant intactId="EBI-12248206">
        <id>P29466-3</id>
    </interactant>
    <interactant intactId="EBI-2107455">
        <id>Q08AM6</id>
        <label>VAC14</label>
    </interactant>
    <organismsDiffer>false</organismsDiffer>
    <experiments>3</experiments>
</comment>
<comment type="interaction">
    <interactant intactId="EBI-12248206">
        <id>P29466-3</id>
    </interactant>
    <interactant intactId="EBI-11141397">
        <id>Q9UBQ0-2</id>
        <label>VPS29</label>
    </interactant>
    <organismsDiffer>false</organismsDiffer>
    <experiments>3</experiments>
</comment>
<comment type="interaction">
    <interactant intactId="EBI-12248206">
        <id>P29466-3</id>
    </interactant>
    <interactant intactId="EBI-720609">
        <id>O76024</id>
        <label>WFS1</label>
    </interactant>
    <organismsDiffer>false</organismsDiffer>
    <experiments>3</experiments>
</comment>
<comment type="interaction">
    <interactant intactId="EBI-1749839">
        <id>PRO_0000004522</id>
    </interactant>
    <interactant intactId="EBI-1749782">
        <id>P01583</id>
        <label>IL1A</label>
    </interactant>
    <organismsDiffer>false</organismsDiffer>
    <experiments>4</experiments>
</comment>
<comment type="subcellular location">
    <subcellularLocation>
        <location evidence="12">Cytoplasm</location>
    </subcellularLocation>
    <subcellularLocation>
        <location evidence="12">Cell membrane</location>
    </subcellularLocation>
</comment>
<comment type="alternative products">
    <event type="alternative splicing"/>
    <isoform>
        <id>P29466-1</id>
        <name>Alpha</name>
        <sequence type="displayed"/>
    </isoform>
    <isoform>
        <id>P29466-2</id>
        <name>Beta</name>
        <sequence type="described" ref="VSP_000798"/>
    </isoform>
    <isoform>
        <id>P29466-3</id>
        <name>Gamma</name>
        <sequence type="described" ref="VSP_000799"/>
    </isoform>
    <isoform>
        <id>P29466-4</id>
        <name>Delta</name>
        <sequence type="described" ref="VSP_000799 VSP_000800"/>
    </isoform>
    <isoform>
        <id>P29466-5</id>
        <name>Epsilon</name>
        <sequence type="described" ref="VSP_000797"/>
    </isoform>
    <text>Additional isoforms seem to exist.</text>
</comment>
<comment type="tissue specificity">
    <text evidence="8">Expressed in larger amounts in spleen and lung. Detected in liver, heart, small intestine, colon, thymus, prostate, skeletal muscle, peripheral blood leukocytes, kidney and testis. No expression in the brain.</text>
</comment>
<comment type="induction">
    <text evidence="11">Transcription and translation induced by M.tuberculosis and a number of different M.tuberculosis components; EsxA is the most potent activator tested (at protein level) (PubMed:20148899).</text>
</comment>
<comment type="PTM">
    <text evidence="19 23">The two subunits are derived from the precursor sequence by an autocatalytic mechanism.</text>
</comment>
<comment type="PTM">
    <text evidence="16">Ubiquitinated via 'Lys-11'-linked polyubiquitination. Deubiquitinated by USP8.</text>
</comment>
<comment type="PTM">
    <text evidence="18">Cleavage in the interdomain linker region is required to induce pyroptosis.</text>
</comment>
<comment type="similarity">
    <text evidence="33">Belongs to the peptidase C14A family.</text>
</comment>
<comment type="sequence caution" evidence="33">
    <conflict type="erroneous initiation">
        <sequence resource="EMBL-CDS" id="AAT72297"/>
    </conflict>
    <text>Truncated N-terminus.</text>
</comment>
<comment type="sequence caution" evidence="33">
    <conflict type="miscellaneous discrepancy">
        <sequence resource="EMBL-CDS" id="AAT72297"/>
    </conflict>
    <text>Probable cloning artifact.</text>
</comment>
<comment type="online information" name="Atlas of Genetics and Cytogenetics in Oncology and Haematology">
    <link uri="https://atlasgeneticsoncology.org/gene/145/CASP1"/>
</comment>
<protein>
    <recommendedName>
        <fullName>Caspase-1</fullName>
        <shortName>CASP-1</shortName>
        <ecNumber evidence="9 21 24">3.4.22.36</ecNumber>
    </recommendedName>
    <alternativeName>
        <fullName evidence="28">Interleukin-1 beta convertase</fullName>
        <shortName evidence="28">IL-1BC</shortName>
    </alternativeName>
    <alternativeName>
        <fullName evidence="26 28">Interleukin-1 beta-converting enzyme</fullName>
        <shortName evidence="26 28 30">ICE</shortName>
        <shortName evidence="26 28">IL-1 beta-converting enzyme</shortName>
    </alternativeName>
    <alternativeName>
        <fullName>p45</fullName>
    </alternativeName>
    <component>
        <recommendedName>
            <fullName evidence="32">Caspase-1 subunit p20</fullName>
        </recommendedName>
    </component>
    <component>
        <recommendedName>
            <fullName evidence="32">Caspase-1 subunit p10</fullName>
        </recommendedName>
    </component>
</protein>
<proteinExistence type="evidence at protein level"/>